<reference key="1">
    <citation type="journal article" date="2007" name="BMC Microbiol.">
        <title>Subtle genetic changes enhance virulence of methicillin resistant and sensitive Staphylococcus aureus.</title>
        <authorList>
            <person name="Highlander S.K."/>
            <person name="Hulten K.G."/>
            <person name="Qin X."/>
            <person name="Jiang H."/>
            <person name="Yerrapragada S."/>
            <person name="Mason E.O. Jr."/>
            <person name="Shang Y."/>
            <person name="Williams T.M."/>
            <person name="Fortunov R.M."/>
            <person name="Liu Y."/>
            <person name="Igboeli O."/>
            <person name="Petrosino J."/>
            <person name="Tirumalai M."/>
            <person name="Uzman A."/>
            <person name="Fox G.E."/>
            <person name="Cardenas A.M."/>
            <person name="Muzny D.M."/>
            <person name="Hemphill L."/>
            <person name="Ding Y."/>
            <person name="Dugan S."/>
            <person name="Blyth P.R."/>
            <person name="Buhay C.J."/>
            <person name="Dinh H.H."/>
            <person name="Hawes A.C."/>
            <person name="Holder M."/>
            <person name="Kovar C.L."/>
            <person name="Lee S.L."/>
            <person name="Liu W."/>
            <person name="Nazareth L.V."/>
            <person name="Wang Q."/>
            <person name="Zhou J."/>
            <person name="Kaplan S.L."/>
            <person name="Weinstock G.M."/>
        </authorList>
    </citation>
    <scope>NUCLEOTIDE SEQUENCE [LARGE SCALE GENOMIC DNA]</scope>
    <source>
        <strain>USA300 / TCH1516</strain>
    </source>
</reference>
<evidence type="ECO:0000250" key="1">
    <source>
        <dbReference type="UniProtKB" id="Q5HJD7"/>
    </source>
</evidence>
<evidence type="ECO:0000255" key="2">
    <source>
        <dbReference type="HAMAP-Rule" id="MF_00488"/>
    </source>
</evidence>
<evidence type="ECO:0000305" key="3"/>
<name>LDH1_STAAT</name>
<protein>
    <recommendedName>
        <fullName evidence="2">L-lactate dehydrogenase 1</fullName>
        <shortName evidence="2">L-LDH 1</shortName>
        <ecNumber evidence="2">1.1.1.27</ecNumber>
    </recommendedName>
</protein>
<keyword id="KW-0963">Cytoplasm</keyword>
<keyword id="KW-0520">NAD</keyword>
<keyword id="KW-0560">Oxidoreductase</keyword>
<keyword id="KW-0597">Phosphoprotein</keyword>
<keyword id="KW-0346">Stress response</keyword>
<sequence length="317" mass="34583">MNKFKGNKVVLIGNGAVGSSYAFSLVNQSIVDELVIIDLDTEKVRGDVMDLKHATPYSPTTVRVKAGEYSDCHDADLVVICAGAAQKPGETRLDLVSKNLKIFKSIVGEVMASKFDGIFLVATNPVDILAYATWKFSGLPKERVIGSGTILDSARFRLLLSEAFDVAPRSVDAQIIGEHGDTELPVWSHANIAGQPLKTLLEQRPEGKAQIEQIFVQTRDAAYDIIQAKGATYYGVAMGLARITEAIFRNEDAVLTVSALLEGEYEEEDVYIGVPAVINRNGIRNVVEIPLNDEEQSKFAHSAKTLKDIMAEAEELK</sequence>
<proteinExistence type="inferred from homology"/>
<dbReference type="EC" id="1.1.1.27" evidence="2"/>
<dbReference type="EMBL" id="CP000730">
    <property type="protein sequence ID" value="ABX28282.1"/>
    <property type="molecule type" value="Genomic_DNA"/>
</dbReference>
<dbReference type="RefSeq" id="WP_001031882.1">
    <property type="nucleotide sequence ID" value="NC_010079.1"/>
</dbReference>
<dbReference type="SMR" id="A8Z0K3"/>
<dbReference type="KEGG" id="sax:USA300HOU_0251"/>
<dbReference type="HOGENOM" id="CLU_045401_1_1_9"/>
<dbReference type="UniPathway" id="UPA00554">
    <property type="reaction ID" value="UER00611"/>
</dbReference>
<dbReference type="GO" id="GO:0005737">
    <property type="term" value="C:cytoplasm"/>
    <property type="evidence" value="ECO:0007669"/>
    <property type="project" value="UniProtKB-SubCell"/>
</dbReference>
<dbReference type="GO" id="GO:0004459">
    <property type="term" value="F:L-lactate dehydrogenase activity"/>
    <property type="evidence" value="ECO:0007669"/>
    <property type="project" value="UniProtKB-UniRule"/>
</dbReference>
<dbReference type="GO" id="GO:0006096">
    <property type="term" value="P:glycolytic process"/>
    <property type="evidence" value="ECO:0007669"/>
    <property type="project" value="UniProtKB-UniRule"/>
</dbReference>
<dbReference type="GO" id="GO:0006089">
    <property type="term" value="P:lactate metabolic process"/>
    <property type="evidence" value="ECO:0007669"/>
    <property type="project" value="TreeGrafter"/>
</dbReference>
<dbReference type="CDD" id="cd05291">
    <property type="entry name" value="HicDH_like"/>
    <property type="match status" value="1"/>
</dbReference>
<dbReference type="FunFam" id="3.40.50.720:FF:000018">
    <property type="entry name" value="Malate dehydrogenase"/>
    <property type="match status" value="1"/>
</dbReference>
<dbReference type="Gene3D" id="3.90.110.10">
    <property type="entry name" value="Lactate dehydrogenase/glycoside hydrolase, family 4, C-terminal"/>
    <property type="match status" value="1"/>
</dbReference>
<dbReference type="Gene3D" id="3.40.50.720">
    <property type="entry name" value="NAD(P)-binding Rossmann-like Domain"/>
    <property type="match status" value="1"/>
</dbReference>
<dbReference type="HAMAP" id="MF_00488">
    <property type="entry name" value="Lactate_dehydrog"/>
    <property type="match status" value="1"/>
</dbReference>
<dbReference type="InterPro" id="IPR001557">
    <property type="entry name" value="L-lactate/malate_DH"/>
</dbReference>
<dbReference type="InterPro" id="IPR011304">
    <property type="entry name" value="L-lactate_DH"/>
</dbReference>
<dbReference type="InterPro" id="IPR018177">
    <property type="entry name" value="L-lactate_DH_AS"/>
</dbReference>
<dbReference type="InterPro" id="IPR022383">
    <property type="entry name" value="Lactate/malate_DH_C"/>
</dbReference>
<dbReference type="InterPro" id="IPR001236">
    <property type="entry name" value="Lactate/malate_DH_N"/>
</dbReference>
<dbReference type="InterPro" id="IPR015955">
    <property type="entry name" value="Lactate_DH/Glyco_Ohase_4_C"/>
</dbReference>
<dbReference type="InterPro" id="IPR036291">
    <property type="entry name" value="NAD(P)-bd_dom_sf"/>
</dbReference>
<dbReference type="NCBIfam" id="TIGR01771">
    <property type="entry name" value="L-LDH-NAD"/>
    <property type="match status" value="1"/>
</dbReference>
<dbReference type="NCBIfam" id="NF000824">
    <property type="entry name" value="PRK00066.1"/>
    <property type="match status" value="1"/>
</dbReference>
<dbReference type="NCBIfam" id="NF004863">
    <property type="entry name" value="PRK06223.1"/>
    <property type="match status" value="1"/>
</dbReference>
<dbReference type="PANTHER" id="PTHR43128">
    <property type="entry name" value="L-2-HYDROXYCARBOXYLATE DEHYDROGENASE (NAD(P)(+))"/>
    <property type="match status" value="1"/>
</dbReference>
<dbReference type="PANTHER" id="PTHR43128:SF16">
    <property type="entry name" value="L-LACTATE DEHYDROGENASE"/>
    <property type="match status" value="1"/>
</dbReference>
<dbReference type="Pfam" id="PF02866">
    <property type="entry name" value="Ldh_1_C"/>
    <property type="match status" value="1"/>
</dbReference>
<dbReference type="Pfam" id="PF00056">
    <property type="entry name" value="Ldh_1_N"/>
    <property type="match status" value="1"/>
</dbReference>
<dbReference type="PIRSF" id="PIRSF000102">
    <property type="entry name" value="Lac_mal_DH"/>
    <property type="match status" value="1"/>
</dbReference>
<dbReference type="PRINTS" id="PR00086">
    <property type="entry name" value="LLDHDRGNASE"/>
</dbReference>
<dbReference type="SUPFAM" id="SSF56327">
    <property type="entry name" value="LDH C-terminal domain-like"/>
    <property type="match status" value="1"/>
</dbReference>
<dbReference type="SUPFAM" id="SSF51735">
    <property type="entry name" value="NAD(P)-binding Rossmann-fold domains"/>
    <property type="match status" value="1"/>
</dbReference>
<dbReference type="PROSITE" id="PS00064">
    <property type="entry name" value="L_LDH"/>
    <property type="match status" value="1"/>
</dbReference>
<gene>
    <name evidence="2" type="primary">ldh1</name>
    <name type="ordered locus">USA300HOU_0251</name>
</gene>
<organism>
    <name type="scientific">Staphylococcus aureus (strain USA300 / TCH1516)</name>
    <dbReference type="NCBI Taxonomy" id="451516"/>
    <lineage>
        <taxon>Bacteria</taxon>
        <taxon>Bacillati</taxon>
        <taxon>Bacillota</taxon>
        <taxon>Bacilli</taxon>
        <taxon>Bacillales</taxon>
        <taxon>Staphylococcaceae</taxon>
        <taxon>Staphylococcus</taxon>
    </lineage>
</organism>
<accession>A8Z0K3</accession>
<comment type="function">
    <text evidence="1 2">Catalyzes the conversion of lactate to pyruvate (Potential). Appears to be the primary factor that allows S.aureus growth during nitrosative stress in both aerobically and anaerobically cultured cells (By similarity).</text>
</comment>
<comment type="catalytic activity">
    <reaction evidence="2">
        <text>(S)-lactate + NAD(+) = pyruvate + NADH + H(+)</text>
        <dbReference type="Rhea" id="RHEA:23444"/>
        <dbReference type="ChEBI" id="CHEBI:15361"/>
        <dbReference type="ChEBI" id="CHEBI:15378"/>
        <dbReference type="ChEBI" id="CHEBI:16651"/>
        <dbReference type="ChEBI" id="CHEBI:57540"/>
        <dbReference type="ChEBI" id="CHEBI:57945"/>
        <dbReference type="EC" id="1.1.1.27"/>
    </reaction>
</comment>
<comment type="pathway">
    <text evidence="2">Fermentation; pyruvate fermentation to lactate; (S)-lactate from pyruvate: step 1/1.</text>
</comment>
<comment type="subunit">
    <text evidence="2">Homotetramer.</text>
</comment>
<comment type="subcellular location">
    <subcellularLocation>
        <location evidence="2">Cytoplasm</location>
    </subcellularLocation>
</comment>
<comment type="similarity">
    <text evidence="2 3">Belongs to the LDH/MDH superfamily. LDH family.</text>
</comment>
<feature type="chain" id="PRO_1000081368" description="L-lactate dehydrogenase 1">
    <location>
        <begin position="1"/>
        <end position="317"/>
    </location>
</feature>
<feature type="active site" description="Proton acceptor" evidence="2">
    <location>
        <position position="179"/>
    </location>
</feature>
<feature type="binding site" evidence="2">
    <location>
        <position position="17"/>
    </location>
    <ligand>
        <name>NAD(+)</name>
        <dbReference type="ChEBI" id="CHEBI:57540"/>
    </ligand>
</feature>
<feature type="binding site" evidence="2">
    <location>
        <position position="38"/>
    </location>
    <ligand>
        <name>NAD(+)</name>
        <dbReference type="ChEBI" id="CHEBI:57540"/>
    </ligand>
</feature>
<feature type="binding site" evidence="2">
    <location>
        <position position="43"/>
    </location>
    <ligand>
        <name>NAD(+)</name>
        <dbReference type="ChEBI" id="CHEBI:57540"/>
    </ligand>
</feature>
<feature type="binding site" evidence="2">
    <location>
        <position position="69"/>
    </location>
    <ligand>
        <name>NAD(+)</name>
        <dbReference type="ChEBI" id="CHEBI:57540"/>
    </ligand>
</feature>
<feature type="binding site" evidence="2">
    <location>
        <begin position="83"/>
        <end position="84"/>
    </location>
    <ligand>
        <name>NAD(+)</name>
        <dbReference type="ChEBI" id="CHEBI:57540"/>
    </ligand>
</feature>
<feature type="binding site" evidence="2">
    <location>
        <position position="86"/>
    </location>
    <ligand>
        <name>substrate</name>
    </ligand>
</feature>
<feature type="binding site" evidence="2">
    <location>
        <position position="92"/>
    </location>
    <ligand>
        <name>substrate</name>
    </ligand>
</feature>
<feature type="binding site" evidence="2">
    <location>
        <position position="105"/>
    </location>
    <ligand>
        <name>NAD(+)</name>
        <dbReference type="ChEBI" id="CHEBI:57540"/>
    </ligand>
</feature>
<feature type="binding site" evidence="2">
    <location>
        <begin position="122"/>
        <end position="124"/>
    </location>
    <ligand>
        <name>NAD(+)</name>
        <dbReference type="ChEBI" id="CHEBI:57540"/>
    </ligand>
</feature>
<feature type="binding site" evidence="2">
    <location>
        <begin position="124"/>
        <end position="127"/>
    </location>
    <ligand>
        <name>substrate</name>
    </ligand>
</feature>
<feature type="binding site" evidence="2">
    <location>
        <position position="147"/>
    </location>
    <ligand>
        <name>NAD(+)</name>
        <dbReference type="ChEBI" id="CHEBI:57540"/>
    </ligand>
</feature>
<feature type="binding site" evidence="2">
    <location>
        <begin position="152"/>
        <end position="155"/>
    </location>
    <ligand>
        <name>substrate</name>
    </ligand>
</feature>
<feature type="binding site" evidence="2">
    <location>
        <position position="232"/>
    </location>
    <ligand>
        <name>substrate</name>
    </ligand>
</feature>
<feature type="modified residue" description="Phosphotyrosine" evidence="2">
    <location>
        <position position="223"/>
    </location>
</feature>